<sequence>MPPRKKPKSSALKSNKQSSANHSSQPSTFGIQQLFLRHIQNSQSTSNSHTSTADPVDQQNVNGLASDTAVLTPQNPLGTSNEKPDESKDMDQQLTEASPKISKNLKRFSPGMLIKQSQDDCGGEITWKISPVNERLRAAAKNIPKMMDLTENSLGVKSSTIRPCSLNKLVQKQCPTSGITSKVEQWLSSPSKKASKRPAFATNRVMERVNPSPDAEFEIVNTSSSGNSPFQTPPSLSCPHNKLPCTVTCSGACGSMGAGQHKKALLELLDQVEDVIAVDDKTTDDVGIVMPQARVKDDIISSVVDCAVDEGPVSLPKMQNSINPDSYFLVLEVSEKRGSGSSSKGQCPYKVLRLLDEHTGVECALYLWDEWFYSTVSPGDSINVIGEFDGDGKCDVDRQNNFLIVHPDTLVAGTRVAASFGCPRRTVLDERLRSNEHATVALLGTLQHQVFQAGLSQESPSVDGLQEYASTVIEKSIESLYACGVHEGDVRSTLFKAIPKMLNWIEHFRYSKDSEVSKVDFGSTIGKKAVKVSEVIDIEEMSWAPKYGLKGMIDASVRVIVESDMNTVNEKIMPLEFKSGKAPSGQSSIEHSAQVILYTLLMSERYLKHIDNGLLYYLQSDQTQGISVQRSDLVGLIIRRNELANDILVASTTQQLPPMLRNPNICRNCRHLDVCTIYHKADGGNTESSGLGDVFDTHVSHLSTLHFNFLRHWDRLIDLEGREMQLLRKDIAHPHGSKGSHSASYLSSMVLDVTNGFQHHNSHKETRFIYRFVRQKSSESRERVTSEDMIRTGNLATDDLDCKLRTGDRVILRTEVSHLTVANGIIADISRTHISVSLSKRLRLPWSEPSSEVSNLSHELWRIYKDEFMTSFSVMRFNLMQLFVQNGHNIRKMIVDLEPPRFDNGSILSQDPAISYIWSEKSLNNDQRQAILKILTAKDYALILGMPGTGKTSTMVHAVKALLIRGSSILLASYTNSAVDNLLIKLKAQGIEFLRIGRDEAVHEEVRESCFSAMNMCSVEDIKKKLDQVKVVASTCLGINSPLLVNRRFDVCIIDEAGQIALPVSIGPLLFASTFVLVGDHYQLPPLVQSTEARENGMGISLFRRLSEAHPQAISVLQNQYRMCRGIMELSNALIYGDRLCCGSAEVADATLVLSTSSSTSPWLKKVLEPTRTVVFVNTDMLRAFEARDQNAINNPVEASIIAEIVEELVNNGVDSKDIGIITPYNSQASLIQHAIPTTPVEIHTIDKYQGRDKDCILVSFVRSREKPRSSASSLLGDWHRINVALTRAKKKLIMVGSQRTLSRVPLLMLLLNKVKEQSGILNLLPGDLKP</sequence>
<name>JHS1_ARATH</name>
<reference key="1">
    <citation type="journal article" date="2000" name="Nature">
        <title>Sequence and analysis of chromosome 1 of the plant Arabidopsis thaliana.</title>
        <authorList>
            <person name="Theologis A."/>
            <person name="Ecker J.R."/>
            <person name="Palm C.J."/>
            <person name="Federspiel N.A."/>
            <person name="Kaul S."/>
            <person name="White O."/>
            <person name="Alonso J."/>
            <person name="Altafi H."/>
            <person name="Araujo R."/>
            <person name="Bowman C.L."/>
            <person name="Brooks S.Y."/>
            <person name="Buehler E."/>
            <person name="Chan A."/>
            <person name="Chao Q."/>
            <person name="Chen H."/>
            <person name="Cheuk R.F."/>
            <person name="Chin C.W."/>
            <person name="Chung M.K."/>
            <person name="Conn L."/>
            <person name="Conway A.B."/>
            <person name="Conway A.R."/>
            <person name="Creasy T.H."/>
            <person name="Dewar K."/>
            <person name="Dunn P."/>
            <person name="Etgu P."/>
            <person name="Feldblyum T.V."/>
            <person name="Feng J.-D."/>
            <person name="Fong B."/>
            <person name="Fujii C.Y."/>
            <person name="Gill J.E."/>
            <person name="Goldsmith A.D."/>
            <person name="Haas B."/>
            <person name="Hansen N.F."/>
            <person name="Hughes B."/>
            <person name="Huizar L."/>
            <person name="Hunter J.L."/>
            <person name="Jenkins J."/>
            <person name="Johnson-Hopson C."/>
            <person name="Khan S."/>
            <person name="Khaykin E."/>
            <person name="Kim C.J."/>
            <person name="Koo H.L."/>
            <person name="Kremenetskaia I."/>
            <person name="Kurtz D.B."/>
            <person name="Kwan A."/>
            <person name="Lam B."/>
            <person name="Langin-Hooper S."/>
            <person name="Lee A."/>
            <person name="Lee J.M."/>
            <person name="Lenz C.A."/>
            <person name="Li J.H."/>
            <person name="Li Y.-P."/>
            <person name="Lin X."/>
            <person name="Liu S.X."/>
            <person name="Liu Z.A."/>
            <person name="Luros J.S."/>
            <person name="Maiti R."/>
            <person name="Marziali A."/>
            <person name="Militscher J."/>
            <person name="Miranda M."/>
            <person name="Nguyen M."/>
            <person name="Nierman W.C."/>
            <person name="Osborne B.I."/>
            <person name="Pai G."/>
            <person name="Peterson J."/>
            <person name="Pham P.K."/>
            <person name="Rizzo M."/>
            <person name="Rooney T."/>
            <person name="Rowley D."/>
            <person name="Sakano H."/>
            <person name="Salzberg S.L."/>
            <person name="Schwartz J.R."/>
            <person name="Shinn P."/>
            <person name="Southwick A.M."/>
            <person name="Sun H."/>
            <person name="Tallon L.J."/>
            <person name="Tambunga G."/>
            <person name="Toriumi M.J."/>
            <person name="Town C.D."/>
            <person name="Utterback T."/>
            <person name="Van Aken S."/>
            <person name="Vaysberg M."/>
            <person name="Vysotskaia V.S."/>
            <person name="Walker M."/>
            <person name="Wu D."/>
            <person name="Yu G."/>
            <person name="Fraser C.M."/>
            <person name="Venter J.C."/>
            <person name="Davis R.W."/>
        </authorList>
    </citation>
    <scope>NUCLEOTIDE SEQUENCE [LARGE SCALE GENOMIC DNA]</scope>
    <source>
        <strain>cv. Columbia</strain>
    </source>
</reference>
<reference key="2">
    <citation type="journal article" date="2017" name="Plant J.">
        <title>Araport11: a complete reannotation of the Arabidopsis thaliana reference genome.</title>
        <authorList>
            <person name="Cheng C.Y."/>
            <person name="Krishnakumar V."/>
            <person name="Chan A.P."/>
            <person name="Thibaud-Nissen F."/>
            <person name="Schobel S."/>
            <person name="Town C.D."/>
        </authorList>
    </citation>
    <scope>GENOME REANNOTATION</scope>
    <source>
        <strain>cv. Columbia</strain>
    </source>
</reference>
<reference key="3">
    <citation type="journal article" date="2004" name="Plant Physiol.">
        <title>Identification of genes required for embryo development in Arabidopsis.</title>
        <authorList>
            <person name="Tzafrir I."/>
            <person name="Pena-Muralla R."/>
            <person name="Dickerman A."/>
            <person name="Berg M."/>
            <person name="Rogers R."/>
            <person name="Hutchens S."/>
            <person name="Sweeney T.C."/>
            <person name="McElver J."/>
            <person name="Aux G."/>
            <person name="Patton D."/>
            <person name="Meinke D."/>
        </authorList>
    </citation>
    <scope>FUNCTION [LARGE SCALE ANALYSIS]</scope>
    <scope>DISRUPTION PHENOTYPE [LARGE SCALE ANALYSIS]</scope>
    <source>
        <strain>cv. Columbia</strain>
    </source>
</reference>
<reference key="4">
    <citation type="journal article" date="2016" name="Plant Physiol.">
        <title>A DNA2 homolog is required for DNA damage repair, cell cycle regulation, and meristem maintenance in plants.</title>
        <authorList>
            <person name="Jia N."/>
            <person name="Liu X."/>
            <person name="Gao H."/>
        </authorList>
    </citation>
    <scope>FUNCTION</scope>
    <scope>DISRUPTION PHENOTYPE</scope>
    <scope>TISSUE SPECIFICITY</scope>
    <scope>SUBCELLULAR LOCATION</scope>
    <source>
        <strain>cv. Columbia</strain>
    </source>
</reference>
<comment type="function">
    <text evidence="3 6 7">Essential protein required during embryogenesis (PubMed:15266054). Key enzyme involved in DNA replication and damage repair, shoot apical meristem (SAM) maintenance, and development (PubMed:26951435). Involved in Okazaki fragments processing. Possesses different enzymatic activities, such as single-stranded DNA (ssDNA)-dependent ATPase, 5'-3' helicase and endonuclease activities. While the ATPase and endonuclease activities are well-defined and play a key role in Okazaki fragments processing and DSB repair, the 5'-3' DNA helicase activity is atypical: it cannot load onto its tracking strand internally and has an absolute free 5'-end requirement (By similarity).</text>
</comment>
<comment type="catalytic activity">
    <reaction evidence="2">
        <text>ATP + H2O = ADP + phosphate + H(+)</text>
        <dbReference type="Rhea" id="RHEA:13065"/>
        <dbReference type="ChEBI" id="CHEBI:15377"/>
        <dbReference type="ChEBI" id="CHEBI:15378"/>
        <dbReference type="ChEBI" id="CHEBI:30616"/>
        <dbReference type="ChEBI" id="CHEBI:43474"/>
        <dbReference type="ChEBI" id="CHEBI:456216"/>
        <dbReference type="EC" id="3.6.4.12"/>
    </reaction>
</comment>
<comment type="cofactor">
    <cofactor evidence="1">
        <name>[4Fe-4S] cluster</name>
        <dbReference type="ChEBI" id="CHEBI:49883"/>
    </cofactor>
    <text evidence="1">Binds 1 [4Fe-4S] cluster.</text>
</comment>
<comment type="subcellular location">
    <subcellularLocation>
        <location evidence="7">Nucleus</location>
    </subcellularLocation>
    <subcellularLocation>
        <location evidence="2">Chromosome</location>
    </subcellularLocation>
    <text evidence="7">Localized to nuclear foci in response to DNA damage.</text>
</comment>
<comment type="alternative products">
    <event type="alternative splicing"/>
    <isoform>
        <id>A0A1P8ASY1-1</id>
        <name>1</name>
        <sequence type="displayed"/>
    </isoform>
    <isoform>
        <id>A0A1P8ASY1-2</id>
        <name>2</name>
        <sequence type="described" ref="VSP_060109"/>
    </isoform>
    <isoform>
        <id>A0A1P8ASY1-3</id>
        <name>3</name>
        <sequence type="described" ref="VSP_060110"/>
    </isoform>
</comment>
<comment type="tissue specificity">
    <text evidence="7">Strongly expressed in meristems, including both root and shoot apical meristems (RAM and SAM) (PubMed:26951435). Also present in the vasculature and in young floral tissues (PubMed:26951435).</text>
</comment>
<comment type="disruption phenotype">
    <text evidence="6 7">Defective embryo arrested at preglobular/early globular stage with the formation of giant endosperm nuclei (PubMed:15266054). In jhs1, retarded growth, abnormal pattern of shoot apical meristem (SAM) cell division and differentiation, and morphological defects such as fasciation, irregular arrangement of siliques and phyllotaxy, and short roots (PubMed:26951435). Increased sensitivity to DNA damage stress (PubMed:26951435). Increased DNA damage response, including increased expression of genes involved in DNA damage repair and cell cycle regulation, and a higher frequency of homologous recombination (PubMed:26951435). Meristems exhibit a delayed cell cycle progression at the G2 or late S phase, and a misregulation of genes essential for meristem maintenance (PubMed:26951435).</text>
</comment>
<comment type="miscellaneous">
    <text evidence="11">'Jing he sheng' means fasciated stem in Chinese.</text>
</comment>
<comment type="similarity">
    <text evidence="10">Belongs to the DNA2/NAM7 helicase family.</text>
</comment>
<comment type="sequence caution" evidence="10">
    <conflict type="erroneous gene model prediction">
        <sequence resource="EMBL-CDS" id="AAB70418"/>
    </conflict>
</comment>
<comment type="online information" name="Seed defective Arabidopsis mutants">
    <link uri="http://seedgenes.org/MutantList"/>
</comment>
<dbReference type="EC" id="3.1.-.-"/>
<dbReference type="EC" id="3.6.4.12" evidence="2"/>
<dbReference type="EMBL" id="AC000106">
    <property type="protein sequence ID" value="AAB70418.1"/>
    <property type="status" value="ALT_SEQ"/>
    <property type="molecule type" value="Genomic_DNA"/>
</dbReference>
<dbReference type="EMBL" id="CP002684">
    <property type="protein sequence ID" value="AEE28357.1"/>
    <property type="molecule type" value="Genomic_DNA"/>
</dbReference>
<dbReference type="EMBL" id="CP002684">
    <property type="protein sequence ID" value="ANM59735.1"/>
    <property type="molecule type" value="Genomic_DNA"/>
</dbReference>
<dbReference type="EMBL" id="CP002684">
    <property type="protein sequence ID" value="ANM59736.1"/>
    <property type="molecule type" value="Genomic_DNA"/>
</dbReference>
<dbReference type="PIR" id="C86220">
    <property type="entry name" value="C86220"/>
</dbReference>
<dbReference type="RefSeq" id="NP_001184943.1">
    <molecule id="A0A1P8ASY1-2"/>
    <property type="nucleotide sequence ID" value="NM_001198014.1"/>
</dbReference>
<dbReference type="RefSeq" id="NP_001322072.1">
    <molecule id="A0A1P8ASY1-1"/>
    <property type="nucleotide sequence ID" value="NM_001331795.1"/>
</dbReference>
<dbReference type="RefSeq" id="NP_001322073.1">
    <molecule id="A0A1P8ASY1-3"/>
    <property type="nucleotide sequence ID" value="NM_001331796.1"/>
</dbReference>
<dbReference type="SMR" id="A0A1P8ASY1"/>
<dbReference type="FunCoup" id="A0A1P8ASY1">
    <property type="interactions" value="2526"/>
</dbReference>
<dbReference type="STRING" id="3702.A0A1P8ASY1"/>
<dbReference type="iPTMnet" id="A0A1P8ASY1"/>
<dbReference type="PaxDb" id="3702-AT1G08840.2"/>
<dbReference type="ProMEX" id="A0A1P8ASY1"/>
<dbReference type="ProteomicsDB" id="197793"/>
<dbReference type="ProteomicsDB" id="203611">
    <molecule id="A0A1P8ASY1-1"/>
</dbReference>
<dbReference type="ProteomicsDB" id="213725"/>
<dbReference type="EnsemblPlants" id="AT1G08840.2">
    <molecule id="A0A1P8ASY1-2"/>
    <property type="protein sequence ID" value="AT1G08840.2"/>
    <property type="gene ID" value="AT1G08840"/>
</dbReference>
<dbReference type="EnsemblPlants" id="AT1G08840.3">
    <molecule id="A0A1P8ASY1-1"/>
    <property type="protein sequence ID" value="AT1G08840.3"/>
    <property type="gene ID" value="AT1G08840"/>
</dbReference>
<dbReference type="EnsemblPlants" id="AT1G08840.4">
    <molecule id="A0A1P8ASY1-3"/>
    <property type="protein sequence ID" value="AT1G08840.4"/>
    <property type="gene ID" value="AT1G08840"/>
</dbReference>
<dbReference type="GeneID" id="837406"/>
<dbReference type="Gramene" id="AT1G08840.2">
    <molecule id="A0A1P8ASY1-2"/>
    <property type="protein sequence ID" value="AT1G08840.2"/>
    <property type="gene ID" value="AT1G08840"/>
</dbReference>
<dbReference type="Gramene" id="AT1G08840.3">
    <molecule id="A0A1P8ASY1-1"/>
    <property type="protein sequence ID" value="AT1G08840.3"/>
    <property type="gene ID" value="AT1G08840"/>
</dbReference>
<dbReference type="Gramene" id="AT1G08840.4">
    <molecule id="A0A1P8ASY1-3"/>
    <property type="protein sequence ID" value="AT1G08840.4"/>
    <property type="gene ID" value="AT1G08840"/>
</dbReference>
<dbReference type="KEGG" id="ath:AT1G08840"/>
<dbReference type="Araport" id="AT1G08840"/>
<dbReference type="TAIR" id="AT1G08840">
    <property type="gene designation" value="EMB2411"/>
</dbReference>
<dbReference type="eggNOG" id="KOG1805">
    <property type="taxonomic scope" value="Eukaryota"/>
</dbReference>
<dbReference type="HOGENOM" id="CLU_001666_2_2_1"/>
<dbReference type="InParanoid" id="A0A1P8ASY1"/>
<dbReference type="OMA" id="NYCEAAI"/>
<dbReference type="OrthoDB" id="306218at2759"/>
<dbReference type="PRO" id="PR:A0A1P8ASY1"/>
<dbReference type="Proteomes" id="UP000006548">
    <property type="component" value="Chromosome 1"/>
</dbReference>
<dbReference type="ExpressionAtlas" id="A0A1P8ASY1">
    <property type="expression patterns" value="baseline and differential"/>
</dbReference>
<dbReference type="GO" id="GO:0005694">
    <property type="term" value="C:chromosome"/>
    <property type="evidence" value="ECO:0007669"/>
    <property type="project" value="UniProtKB-SubCell"/>
</dbReference>
<dbReference type="GO" id="GO:0005634">
    <property type="term" value="C:nucleus"/>
    <property type="evidence" value="ECO:0000314"/>
    <property type="project" value="UniProtKB"/>
</dbReference>
<dbReference type="GO" id="GO:0051539">
    <property type="term" value="F:4 iron, 4 sulfur cluster binding"/>
    <property type="evidence" value="ECO:0007669"/>
    <property type="project" value="UniProtKB-KW"/>
</dbReference>
<dbReference type="GO" id="GO:0005524">
    <property type="term" value="F:ATP binding"/>
    <property type="evidence" value="ECO:0007669"/>
    <property type="project" value="UniProtKB-KW"/>
</dbReference>
<dbReference type="GO" id="GO:0016887">
    <property type="term" value="F:ATP hydrolysis activity"/>
    <property type="evidence" value="ECO:0007669"/>
    <property type="project" value="RHEA"/>
</dbReference>
<dbReference type="GO" id="GO:0003677">
    <property type="term" value="F:DNA binding"/>
    <property type="evidence" value="ECO:0007669"/>
    <property type="project" value="UniProtKB-KW"/>
</dbReference>
<dbReference type="GO" id="GO:0046872">
    <property type="term" value="F:metal ion binding"/>
    <property type="evidence" value="ECO:0007669"/>
    <property type="project" value="UniProtKB-KW"/>
</dbReference>
<dbReference type="GO" id="GO:0004518">
    <property type="term" value="F:nuclease activity"/>
    <property type="evidence" value="ECO:0007669"/>
    <property type="project" value="UniProtKB-KW"/>
</dbReference>
<dbReference type="GO" id="GO:0017116">
    <property type="term" value="F:single-stranded DNA helicase activity"/>
    <property type="evidence" value="ECO:0007669"/>
    <property type="project" value="InterPro"/>
</dbReference>
<dbReference type="GO" id="GO:0006974">
    <property type="term" value="P:DNA damage response"/>
    <property type="evidence" value="ECO:0000315"/>
    <property type="project" value="TAIR"/>
</dbReference>
<dbReference type="GO" id="GO:0006281">
    <property type="term" value="P:DNA repair"/>
    <property type="evidence" value="ECO:0000315"/>
    <property type="project" value="UniProtKB"/>
</dbReference>
<dbReference type="GO" id="GO:0006260">
    <property type="term" value="P:DNA replication"/>
    <property type="evidence" value="ECO:0000315"/>
    <property type="project" value="UniProtKB"/>
</dbReference>
<dbReference type="GO" id="GO:0010073">
    <property type="term" value="P:meristem maintenance"/>
    <property type="evidence" value="ECO:0000315"/>
    <property type="project" value="UniProtKB"/>
</dbReference>
<dbReference type="CDD" id="cd18041">
    <property type="entry name" value="DEXXQc_DNA2"/>
    <property type="match status" value="1"/>
</dbReference>
<dbReference type="CDD" id="cd22318">
    <property type="entry name" value="DNA2_N-like"/>
    <property type="match status" value="1"/>
</dbReference>
<dbReference type="CDD" id="cd18808">
    <property type="entry name" value="SF1_C_Upf1"/>
    <property type="match status" value="1"/>
</dbReference>
<dbReference type="FunFam" id="3.40.50.300:FF:001490">
    <property type="entry name" value="DNA replication helicase"/>
    <property type="match status" value="1"/>
</dbReference>
<dbReference type="FunFam" id="3.40.50.300:FF:001170">
    <property type="entry name" value="DNA replication helicase Dna2"/>
    <property type="match status" value="1"/>
</dbReference>
<dbReference type="FunFam" id="3.90.320.10:FF:000001">
    <property type="entry name" value="DNA replication helicase Dna2"/>
    <property type="match status" value="1"/>
</dbReference>
<dbReference type="Gene3D" id="3.90.320.10">
    <property type="match status" value="1"/>
</dbReference>
<dbReference type="Gene3D" id="3.40.50.300">
    <property type="entry name" value="P-loop containing nucleotide triphosphate hydrolases"/>
    <property type="match status" value="2"/>
</dbReference>
<dbReference type="InterPro" id="IPR026851">
    <property type="entry name" value="Dna2/JHS1_DEXXQ-box"/>
</dbReference>
<dbReference type="InterPro" id="IPR045055">
    <property type="entry name" value="DNA2/NAM7-like"/>
</dbReference>
<dbReference type="InterPro" id="IPR041679">
    <property type="entry name" value="DNA2/NAM7-like_C"/>
</dbReference>
<dbReference type="InterPro" id="IPR041677">
    <property type="entry name" value="DNA2/NAM7_AAA_11"/>
</dbReference>
<dbReference type="InterPro" id="IPR014808">
    <property type="entry name" value="DNA_replication_fac_Dna2_N"/>
</dbReference>
<dbReference type="InterPro" id="IPR027417">
    <property type="entry name" value="P-loop_NTPase"/>
</dbReference>
<dbReference type="InterPro" id="IPR011604">
    <property type="entry name" value="PDDEXK-like_dom_sf"/>
</dbReference>
<dbReference type="InterPro" id="IPR047187">
    <property type="entry name" value="SF1_C_Upf1"/>
</dbReference>
<dbReference type="PANTHER" id="PTHR10887:SF433">
    <property type="entry name" value="DNA REPLICATION ATP-DEPENDENT HELICASE_NUCLEASE DNA2"/>
    <property type="match status" value="1"/>
</dbReference>
<dbReference type="PANTHER" id="PTHR10887">
    <property type="entry name" value="DNA2/NAM7 HELICASE FAMILY"/>
    <property type="match status" value="1"/>
</dbReference>
<dbReference type="Pfam" id="PF13086">
    <property type="entry name" value="AAA_11"/>
    <property type="match status" value="2"/>
</dbReference>
<dbReference type="Pfam" id="PF13087">
    <property type="entry name" value="AAA_12"/>
    <property type="match status" value="1"/>
</dbReference>
<dbReference type="Pfam" id="PF08696">
    <property type="entry name" value="Dna2"/>
    <property type="match status" value="1"/>
</dbReference>
<dbReference type="SUPFAM" id="SSF52540">
    <property type="entry name" value="P-loop containing nucleoside triphosphate hydrolases"/>
    <property type="match status" value="1"/>
</dbReference>
<proteinExistence type="evidence at transcript level"/>
<accession>A0A1P8ASY1</accession>
<accession>A0A1P8ASV1</accession>
<accession>F4HXR6</accession>
<accession>O04043</accession>
<accession>O04044</accession>
<keyword id="KW-0004">4Fe-4S</keyword>
<keyword id="KW-0025">Alternative splicing</keyword>
<keyword id="KW-0067">ATP-binding</keyword>
<keyword id="KW-0158">Chromosome</keyword>
<keyword id="KW-0227">DNA damage</keyword>
<keyword id="KW-0234">DNA repair</keyword>
<keyword id="KW-0235">DNA replication</keyword>
<keyword id="KW-0238">DNA-binding</keyword>
<keyword id="KW-0347">Helicase</keyword>
<keyword id="KW-0378">Hydrolase</keyword>
<keyword id="KW-0408">Iron</keyword>
<keyword id="KW-0411">Iron-sulfur</keyword>
<keyword id="KW-0479">Metal-binding</keyword>
<keyword id="KW-0511">Multifunctional enzyme</keyword>
<keyword id="KW-0540">Nuclease</keyword>
<keyword id="KW-0547">Nucleotide-binding</keyword>
<keyword id="KW-0539">Nucleus</keyword>
<keyword id="KW-1185">Reference proteome</keyword>
<organism>
    <name type="scientific">Arabidopsis thaliana</name>
    <name type="common">Mouse-ear cress</name>
    <dbReference type="NCBI Taxonomy" id="3702"/>
    <lineage>
        <taxon>Eukaryota</taxon>
        <taxon>Viridiplantae</taxon>
        <taxon>Streptophyta</taxon>
        <taxon>Embryophyta</taxon>
        <taxon>Tracheophyta</taxon>
        <taxon>Spermatophyta</taxon>
        <taxon>Magnoliopsida</taxon>
        <taxon>eudicotyledons</taxon>
        <taxon>Gunneridae</taxon>
        <taxon>Pentapetalae</taxon>
        <taxon>rosids</taxon>
        <taxon>malvids</taxon>
        <taxon>Brassicales</taxon>
        <taxon>Brassicaceae</taxon>
        <taxon>Camelineae</taxon>
        <taxon>Arabidopsis</taxon>
    </lineage>
</organism>
<protein>
    <recommendedName>
        <fullName>DNA replication ATP-dependent helicase/nuclease JHS1</fullName>
    </recommendedName>
    <alternativeName>
        <fullName evidence="8">Protein EMBRYO DEFECTIVE 2411</fullName>
    </alternativeName>
    <alternativeName>
        <fullName evidence="9">Protein JING HE SHENG 1</fullName>
    </alternativeName>
    <domain>
        <recommendedName>
            <fullName>DNA replication nuclease JHS1</fullName>
            <ecNumber>3.1.-.-</ecNumber>
        </recommendedName>
    </domain>
    <domain>
        <recommendedName>
            <fullName>DNA replication ATP-dependent helicase JHS1</fullName>
            <ecNumber evidence="2">3.6.4.12</ecNumber>
        </recommendedName>
    </domain>
</protein>
<gene>
    <name evidence="9" type="primary">JHS1</name>
    <name evidence="8" type="synonym">EMB2411</name>
    <name evidence="12" type="ordered locus">At1g08840</name>
    <name evidence="13" type="ORF">F7G19.26</name>
</gene>
<feature type="chain" id="PRO_0000446895" description="DNA replication ATP-dependent helicase/nuclease JHS1">
    <location>
        <begin position="1"/>
        <end position="1331"/>
    </location>
</feature>
<feature type="domain" description="UvrD-like helicase ATP-binding" evidence="4">
    <location>
        <begin position="924"/>
        <end position="1271"/>
    </location>
</feature>
<feature type="region of interest" description="Disordered" evidence="5">
    <location>
        <begin position="1"/>
        <end position="98"/>
    </location>
</feature>
<feature type="region of interest" description="Nuclease activity" evidence="1">
    <location>
        <begin position="362"/>
        <end position="811"/>
    </location>
</feature>
<feature type="region of interest" description="Helicase activity" evidence="1">
    <location>
        <begin position="812"/>
        <end position="1331"/>
    </location>
</feature>
<feature type="short sequence motif" description="Nuclear localization signal" evidence="9">
    <location>
        <begin position="2"/>
        <end position="8"/>
    </location>
</feature>
<feature type="compositionally biased region" description="Polar residues" evidence="5">
    <location>
        <begin position="11"/>
        <end position="31"/>
    </location>
</feature>
<feature type="compositionally biased region" description="Low complexity" evidence="5">
    <location>
        <begin position="40"/>
        <end position="52"/>
    </location>
</feature>
<feature type="compositionally biased region" description="Polar residues" evidence="5">
    <location>
        <begin position="57"/>
        <end position="81"/>
    </location>
</feature>
<feature type="compositionally biased region" description="Basic and acidic residues" evidence="5">
    <location>
        <begin position="82"/>
        <end position="91"/>
    </location>
</feature>
<feature type="binding site" evidence="1">
    <location>
        <position position="422"/>
    </location>
    <ligand>
        <name>[4Fe-4S] cluster</name>
        <dbReference type="ChEBI" id="CHEBI:49883"/>
    </ligand>
</feature>
<feature type="binding site" evidence="1">
    <location>
        <position position="666"/>
    </location>
    <ligand>
        <name>[4Fe-4S] cluster</name>
        <dbReference type="ChEBI" id="CHEBI:49883"/>
    </ligand>
</feature>
<feature type="binding site" evidence="1">
    <location>
        <position position="669"/>
    </location>
    <ligand>
        <name>[4Fe-4S] cluster</name>
        <dbReference type="ChEBI" id="CHEBI:49883"/>
    </ligand>
</feature>
<feature type="binding site" evidence="1">
    <location>
        <position position="675"/>
    </location>
    <ligand>
        <name>[4Fe-4S] cluster</name>
        <dbReference type="ChEBI" id="CHEBI:49883"/>
    </ligand>
</feature>
<feature type="binding site" evidence="4">
    <location>
        <begin position="945"/>
        <end position="952"/>
    </location>
    <ligand>
        <name>ATP</name>
        <dbReference type="ChEBI" id="CHEBI:30616"/>
    </ligand>
</feature>
<feature type="splice variant" id="VSP_060109" description="In isoform 2.">
    <location>
        <begin position="156"/>
        <end position="171"/>
    </location>
</feature>
<feature type="splice variant" id="VSP_060110" description="In isoform 3.">
    <location>
        <begin position="169"/>
        <end position="171"/>
    </location>
</feature>
<evidence type="ECO:0000250" key="1">
    <source>
        <dbReference type="UniProtKB" id="P38859"/>
    </source>
</evidence>
<evidence type="ECO:0000250" key="2">
    <source>
        <dbReference type="UniProtKB" id="P51530"/>
    </source>
</evidence>
<evidence type="ECO:0000250" key="3">
    <source>
        <dbReference type="UniProtKB" id="Q9URU2"/>
    </source>
</evidence>
<evidence type="ECO:0000255" key="4">
    <source>
        <dbReference type="PROSITE-ProRule" id="PRU00560"/>
    </source>
</evidence>
<evidence type="ECO:0000256" key="5">
    <source>
        <dbReference type="SAM" id="MobiDB-lite"/>
    </source>
</evidence>
<evidence type="ECO:0000269" key="6">
    <source>
    </source>
</evidence>
<evidence type="ECO:0000269" key="7">
    <source>
    </source>
</evidence>
<evidence type="ECO:0000303" key="8">
    <source>
    </source>
</evidence>
<evidence type="ECO:0000303" key="9">
    <source>
    </source>
</evidence>
<evidence type="ECO:0000305" key="10"/>
<evidence type="ECO:0000305" key="11">
    <source>
    </source>
</evidence>
<evidence type="ECO:0000312" key="12">
    <source>
        <dbReference type="Araport" id="AT1G08840"/>
    </source>
</evidence>
<evidence type="ECO:0000312" key="13">
    <source>
        <dbReference type="EMBL" id="AAB70418.1"/>
    </source>
</evidence>